<reference key="1">
    <citation type="journal article" date="2002" name="Nature">
        <title>Genome sequence of the plant pathogen Ralstonia solanacearum.</title>
        <authorList>
            <person name="Salanoubat M."/>
            <person name="Genin S."/>
            <person name="Artiguenave F."/>
            <person name="Gouzy J."/>
            <person name="Mangenot S."/>
            <person name="Arlat M."/>
            <person name="Billault A."/>
            <person name="Brottier P."/>
            <person name="Camus J.-C."/>
            <person name="Cattolico L."/>
            <person name="Chandler M."/>
            <person name="Choisne N."/>
            <person name="Claudel-Renard C."/>
            <person name="Cunnac S."/>
            <person name="Demange N."/>
            <person name="Gaspin C."/>
            <person name="Lavie M."/>
            <person name="Moisan A."/>
            <person name="Robert C."/>
            <person name="Saurin W."/>
            <person name="Schiex T."/>
            <person name="Siguier P."/>
            <person name="Thebault P."/>
            <person name="Whalen M."/>
            <person name="Wincker P."/>
            <person name="Levy M."/>
            <person name="Weissenbach J."/>
            <person name="Boucher C.A."/>
        </authorList>
    </citation>
    <scope>NUCLEOTIDE SEQUENCE [LARGE SCALE GENOMIC DNA]</scope>
    <source>
        <strain>ATCC BAA-1114 / GMI1000</strain>
    </source>
</reference>
<accession>Q8Y2E3</accession>
<evidence type="ECO:0000255" key="1">
    <source>
        <dbReference type="HAMAP-Rule" id="MF_00083"/>
    </source>
</evidence>
<evidence type="ECO:0000305" key="2"/>
<dbReference type="EC" id="3.1.1.29" evidence="1"/>
<dbReference type="EMBL" id="AL646052">
    <property type="protein sequence ID" value="CAD13921.1"/>
    <property type="status" value="ALT_INIT"/>
    <property type="molecule type" value="Genomic_DNA"/>
</dbReference>
<dbReference type="RefSeq" id="WP_019717486.1">
    <property type="nucleotide sequence ID" value="NC_003295.1"/>
</dbReference>
<dbReference type="SMR" id="Q8Y2E3"/>
<dbReference type="STRING" id="267608.RSc0393"/>
<dbReference type="EnsemblBacteria" id="CAD13921">
    <property type="protein sequence ID" value="CAD13921"/>
    <property type="gene ID" value="RSc0393"/>
</dbReference>
<dbReference type="KEGG" id="rso:RSc0393"/>
<dbReference type="eggNOG" id="COG0193">
    <property type="taxonomic scope" value="Bacteria"/>
</dbReference>
<dbReference type="HOGENOM" id="CLU_062456_3_1_4"/>
<dbReference type="Proteomes" id="UP000001436">
    <property type="component" value="Chromosome"/>
</dbReference>
<dbReference type="GO" id="GO:0005737">
    <property type="term" value="C:cytoplasm"/>
    <property type="evidence" value="ECO:0007669"/>
    <property type="project" value="UniProtKB-SubCell"/>
</dbReference>
<dbReference type="GO" id="GO:0004045">
    <property type="term" value="F:peptidyl-tRNA hydrolase activity"/>
    <property type="evidence" value="ECO:0007669"/>
    <property type="project" value="UniProtKB-UniRule"/>
</dbReference>
<dbReference type="GO" id="GO:0000049">
    <property type="term" value="F:tRNA binding"/>
    <property type="evidence" value="ECO:0007669"/>
    <property type="project" value="UniProtKB-UniRule"/>
</dbReference>
<dbReference type="GO" id="GO:0006515">
    <property type="term" value="P:protein quality control for misfolded or incompletely synthesized proteins"/>
    <property type="evidence" value="ECO:0007669"/>
    <property type="project" value="UniProtKB-UniRule"/>
</dbReference>
<dbReference type="GO" id="GO:0072344">
    <property type="term" value="P:rescue of stalled ribosome"/>
    <property type="evidence" value="ECO:0007669"/>
    <property type="project" value="UniProtKB-UniRule"/>
</dbReference>
<dbReference type="CDD" id="cd00462">
    <property type="entry name" value="PTH"/>
    <property type="match status" value="1"/>
</dbReference>
<dbReference type="FunFam" id="3.40.50.1470:FF:000001">
    <property type="entry name" value="Peptidyl-tRNA hydrolase"/>
    <property type="match status" value="1"/>
</dbReference>
<dbReference type="Gene3D" id="3.40.50.1470">
    <property type="entry name" value="Peptidyl-tRNA hydrolase"/>
    <property type="match status" value="1"/>
</dbReference>
<dbReference type="HAMAP" id="MF_00083">
    <property type="entry name" value="Pept_tRNA_hydro_bact"/>
    <property type="match status" value="1"/>
</dbReference>
<dbReference type="InterPro" id="IPR001328">
    <property type="entry name" value="Pept_tRNA_hydro"/>
</dbReference>
<dbReference type="InterPro" id="IPR018171">
    <property type="entry name" value="Pept_tRNA_hydro_CS"/>
</dbReference>
<dbReference type="InterPro" id="IPR036416">
    <property type="entry name" value="Pept_tRNA_hydro_sf"/>
</dbReference>
<dbReference type="NCBIfam" id="TIGR00447">
    <property type="entry name" value="pth"/>
    <property type="match status" value="1"/>
</dbReference>
<dbReference type="PANTHER" id="PTHR17224">
    <property type="entry name" value="PEPTIDYL-TRNA HYDROLASE"/>
    <property type="match status" value="1"/>
</dbReference>
<dbReference type="PANTHER" id="PTHR17224:SF1">
    <property type="entry name" value="PEPTIDYL-TRNA HYDROLASE"/>
    <property type="match status" value="1"/>
</dbReference>
<dbReference type="Pfam" id="PF01195">
    <property type="entry name" value="Pept_tRNA_hydro"/>
    <property type="match status" value="1"/>
</dbReference>
<dbReference type="SUPFAM" id="SSF53178">
    <property type="entry name" value="Peptidyl-tRNA hydrolase-like"/>
    <property type="match status" value="1"/>
</dbReference>
<dbReference type="PROSITE" id="PS01195">
    <property type="entry name" value="PEPT_TRNA_HYDROL_1"/>
    <property type="match status" value="1"/>
</dbReference>
<dbReference type="PROSITE" id="PS01196">
    <property type="entry name" value="PEPT_TRNA_HYDROL_2"/>
    <property type="match status" value="1"/>
</dbReference>
<comment type="function">
    <text evidence="1">Hydrolyzes ribosome-free peptidyl-tRNAs (with 1 or more amino acids incorporated), which drop off the ribosome during protein synthesis, or as a result of ribosome stalling.</text>
</comment>
<comment type="function">
    <text evidence="1">Catalyzes the release of premature peptidyl moieties from peptidyl-tRNA molecules trapped in stalled 50S ribosomal subunits, and thus maintains levels of free tRNAs and 50S ribosomes.</text>
</comment>
<comment type="catalytic activity">
    <reaction evidence="1">
        <text>an N-acyl-L-alpha-aminoacyl-tRNA + H2O = an N-acyl-L-amino acid + a tRNA + H(+)</text>
        <dbReference type="Rhea" id="RHEA:54448"/>
        <dbReference type="Rhea" id="RHEA-COMP:10123"/>
        <dbReference type="Rhea" id="RHEA-COMP:13883"/>
        <dbReference type="ChEBI" id="CHEBI:15377"/>
        <dbReference type="ChEBI" id="CHEBI:15378"/>
        <dbReference type="ChEBI" id="CHEBI:59874"/>
        <dbReference type="ChEBI" id="CHEBI:78442"/>
        <dbReference type="ChEBI" id="CHEBI:138191"/>
        <dbReference type="EC" id="3.1.1.29"/>
    </reaction>
</comment>
<comment type="subunit">
    <text evidence="1">Monomer.</text>
</comment>
<comment type="subcellular location">
    <subcellularLocation>
        <location evidence="1">Cytoplasm</location>
    </subcellularLocation>
</comment>
<comment type="similarity">
    <text evidence="1">Belongs to the PTH family.</text>
</comment>
<comment type="sequence caution" evidence="2">
    <conflict type="erroneous initiation">
        <sequence resource="EMBL-CDS" id="CAD13921"/>
    </conflict>
    <text>Extended N-terminus.</text>
</comment>
<organism>
    <name type="scientific">Ralstonia nicotianae (strain ATCC BAA-1114 / GMI1000)</name>
    <name type="common">Ralstonia solanacearum</name>
    <dbReference type="NCBI Taxonomy" id="267608"/>
    <lineage>
        <taxon>Bacteria</taxon>
        <taxon>Pseudomonadati</taxon>
        <taxon>Pseudomonadota</taxon>
        <taxon>Betaproteobacteria</taxon>
        <taxon>Burkholderiales</taxon>
        <taxon>Burkholderiaceae</taxon>
        <taxon>Ralstonia</taxon>
        <taxon>Ralstonia solanacearum species complex</taxon>
    </lineage>
</organism>
<sequence length="200" mass="22040">MIKLIVGLGNPGAEYAATRHNAGFWLVDQLARMGHVTLRNETRFHGYAARATLWSHEVWLLQPQTFMNRSGLATVALARFYKILPDEILVVHDELDLLPGAVKLKLGGGSGGHNGLKDIAAHLTTQQFWRLRVGIGHPRNLLPPGTAPSGQHDVANFVLKAPRREEQELIDRAIDRSLDALPDLVAGNAERAMMRLHTTG</sequence>
<keyword id="KW-0963">Cytoplasm</keyword>
<keyword id="KW-0378">Hydrolase</keyword>
<keyword id="KW-1185">Reference proteome</keyword>
<keyword id="KW-0694">RNA-binding</keyword>
<keyword id="KW-0820">tRNA-binding</keyword>
<name>PTH_RALN1</name>
<feature type="chain" id="PRO_0000187799" description="Peptidyl-tRNA hydrolase">
    <location>
        <begin position="1"/>
        <end position="200"/>
    </location>
</feature>
<feature type="active site" description="Proton acceptor" evidence="1">
    <location>
        <position position="20"/>
    </location>
</feature>
<feature type="binding site" evidence="1">
    <location>
        <position position="15"/>
    </location>
    <ligand>
        <name>tRNA</name>
        <dbReference type="ChEBI" id="CHEBI:17843"/>
    </ligand>
</feature>
<feature type="binding site" evidence="1">
    <location>
        <position position="66"/>
    </location>
    <ligand>
        <name>tRNA</name>
        <dbReference type="ChEBI" id="CHEBI:17843"/>
    </ligand>
</feature>
<feature type="binding site" evidence="1">
    <location>
        <position position="68"/>
    </location>
    <ligand>
        <name>tRNA</name>
        <dbReference type="ChEBI" id="CHEBI:17843"/>
    </ligand>
</feature>
<feature type="binding site" evidence="1">
    <location>
        <position position="114"/>
    </location>
    <ligand>
        <name>tRNA</name>
        <dbReference type="ChEBI" id="CHEBI:17843"/>
    </ligand>
</feature>
<feature type="site" description="Discriminates between blocked and unblocked aminoacyl-tRNA" evidence="1">
    <location>
        <position position="10"/>
    </location>
</feature>
<feature type="site" description="Stabilizes the basic form of H active site to accept a proton" evidence="1">
    <location>
        <position position="93"/>
    </location>
</feature>
<protein>
    <recommendedName>
        <fullName evidence="1">Peptidyl-tRNA hydrolase</fullName>
        <shortName evidence="1">Pth</shortName>
        <ecNumber evidence="1">3.1.1.29</ecNumber>
    </recommendedName>
</protein>
<gene>
    <name evidence="1" type="primary">pth</name>
    <name type="ordered locus">RSc0393</name>
    <name type="ORF">RS03361</name>
</gene>
<proteinExistence type="inferred from homology"/>